<accession>A0Q6A6</accession>
<organism>
    <name type="scientific">Francisella tularensis subsp. novicida (strain U112)</name>
    <dbReference type="NCBI Taxonomy" id="401614"/>
    <lineage>
        <taxon>Bacteria</taxon>
        <taxon>Pseudomonadati</taxon>
        <taxon>Pseudomonadota</taxon>
        <taxon>Gammaproteobacteria</taxon>
        <taxon>Thiotrichales</taxon>
        <taxon>Francisellaceae</taxon>
        <taxon>Francisella</taxon>
    </lineage>
</organism>
<evidence type="ECO:0000255" key="1">
    <source>
        <dbReference type="HAMAP-Rule" id="MF_00281"/>
    </source>
</evidence>
<comment type="catalytic activity">
    <reaction evidence="1">
        <text>tRNA(Phe) + L-phenylalanine + ATP = L-phenylalanyl-tRNA(Phe) + AMP + diphosphate + H(+)</text>
        <dbReference type="Rhea" id="RHEA:19413"/>
        <dbReference type="Rhea" id="RHEA-COMP:9668"/>
        <dbReference type="Rhea" id="RHEA-COMP:9699"/>
        <dbReference type="ChEBI" id="CHEBI:15378"/>
        <dbReference type="ChEBI" id="CHEBI:30616"/>
        <dbReference type="ChEBI" id="CHEBI:33019"/>
        <dbReference type="ChEBI" id="CHEBI:58095"/>
        <dbReference type="ChEBI" id="CHEBI:78442"/>
        <dbReference type="ChEBI" id="CHEBI:78531"/>
        <dbReference type="ChEBI" id="CHEBI:456215"/>
        <dbReference type="EC" id="6.1.1.20"/>
    </reaction>
</comment>
<comment type="cofactor">
    <cofactor evidence="1">
        <name>Mg(2+)</name>
        <dbReference type="ChEBI" id="CHEBI:18420"/>
    </cofactor>
    <text evidence="1">Binds 2 magnesium ions per tetramer.</text>
</comment>
<comment type="subunit">
    <text evidence="1">Tetramer of two alpha and two beta subunits.</text>
</comment>
<comment type="subcellular location">
    <subcellularLocation>
        <location evidence="1">Cytoplasm</location>
    </subcellularLocation>
</comment>
<comment type="similarity">
    <text evidence="1">Belongs to the class-II aminoacyl-tRNA synthetase family. Phe-tRNA synthetase alpha subunit type 1 subfamily.</text>
</comment>
<protein>
    <recommendedName>
        <fullName evidence="1">Phenylalanine--tRNA ligase alpha subunit</fullName>
        <ecNumber evidence="1">6.1.1.20</ecNumber>
    </recommendedName>
    <alternativeName>
        <fullName evidence="1">Phenylalanyl-tRNA synthetase alpha subunit</fullName>
        <shortName evidence="1">PheRS</shortName>
    </alternativeName>
</protein>
<keyword id="KW-0030">Aminoacyl-tRNA synthetase</keyword>
<keyword id="KW-0067">ATP-binding</keyword>
<keyword id="KW-0963">Cytoplasm</keyword>
<keyword id="KW-0436">Ligase</keyword>
<keyword id="KW-0460">Magnesium</keyword>
<keyword id="KW-0479">Metal-binding</keyword>
<keyword id="KW-0547">Nucleotide-binding</keyword>
<keyword id="KW-0648">Protein biosynthesis</keyword>
<proteinExistence type="inferred from homology"/>
<gene>
    <name evidence="1" type="primary">pheS</name>
    <name type="ordered locus">FTN_0883</name>
</gene>
<reference key="1">
    <citation type="journal article" date="2007" name="Genome Biol.">
        <title>Comparison of Francisella tularensis genomes reveals evolutionary events associated with the emergence of human pathogenic strains.</title>
        <authorList>
            <person name="Rohmer L."/>
            <person name="Fong C."/>
            <person name="Abmayr S."/>
            <person name="Wasnick M."/>
            <person name="Larson Freeman T.J."/>
            <person name="Radey M."/>
            <person name="Guina T."/>
            <person name="Svensson K."/>
            <person name="Hayden H.S."/>
            <person name="Jacobs M."/>
            <person name="Gallagher L.A."/>
            <person name="Manoil C."/>
            <person name="Ernst R.K."/>
            <person name="Drees B."/>
            <person name="Buckley D."/>
            <person name="Haugen E."/>
            <person name="Bovee D."/>
            <person name="Zhou Y."/>
            <person name="Chang J."/>
            <person name="Levy R."/>
            <person name="Lim R."/>
            <person name="Gillett W."/>
            <person name="Guenthener D."/>
            <person name="Kang A."/>
            <person name="Shaffer S.A."/>
            <person name="Taylor G."/>
            <person name="Chen J."/>
            <person name="Gallis B."/>
            <person name="D'Argenio D.A."/>
            <person name="Forsman M."/>
            <person name="Olson M.V."/>
            <person name="Goodlett D.R."/>
            <person name="Kaul R."/>
            <person name="Miller S.I."/>
            <person name="Brittnacher M.J."/>
        </authorList>
    </citation>
    <scope>NUCLEOTIDE SEQUENCE [LARGE SCALE GENOMIC DNA]</scope>
    <source>
        <strain>U112</strain>
    </source>
</reference>
<feature type="chain" id="PRO_1000006833" description="Phenylalanine--tRNA ligase alpha subunit">
    <location>
        <begin position="1"/>
        <end position="337"/>
    </location>
</feature>
<feature type="binding site" evidence="1">
    <location>
        <position position="252"/>
    </location>
    <ligand>
        <name>Mg(2+)</name>
        <dbReference type="ChEBI" id="CHEBI:18420"/>
        <note>shared with beta subunit</note>
    </ligand>
</feature>
<name>SYFA_FRATN</name>
<sequence>MQIVEQMKDKALAELNLVKDKKTLDDIRVKYLGKKGELTEMMKLIATLPNDEKPKLGQAVNIAKQALQEAINLKLANFEEQELNEKLAQEKIDITLSGVGQNQGSLHPVTKTLNRIEAFFKQNGFAIEFGPEIESDYYNFETLNIPSHHPARAMHDTFYIDETHVLRTHTSGVQIRTMEKQQPPIRIIAPGRVYRCDSDITHTPMFHQVEGLLVDKDVSFADLKGLLHAFLNSFFEKDLKVRFRPSYFPFTEPSAEADIECVMCDGKGCRVCKHTGWLEVLGCGMVHPKVLKAGNVDPEKYQGFAFGMGVERLSMLRYGIDDLRMFFENDLRFLKQF</sequence>
<dbReference type="EC" id="6.1.1.20" evidence="1"/>
<dbReference type="EMBL" id="CP000439">
    <property type="protein sequence ID" value="ABK89771.1"/>
    <property type="molecule type" value="Genomic_DNA"/>
</dbReference>
<dbReference type="RefSeq" id="WP_003039175.1">
    <property type="nucleotide sequence ID" value="NC_008601.1"/>
</dbReference>
<dbReference type="SMR" id="A0Q6A6"/>
<dbReference type="KEGG" id="ftn:FTN_0883"/>
<dbReference type="KEGG" id="ftx:AW25_1135"/>
<dbReference type="BioCyc" id="FTUL401614:G1G75-920-MONOMER"/>
<dbReference type="Proteomes" id="UP000000762">
    <property type="component" value="Chromosome"/>
</dbReference>
<dbReference type="GO" id="GO:0005737">
    <property type="term" value="C:cytoplasm"/>
    <property type="evidence" value="ECO:0007669"/>
    <property type="project" value="UniProtKB-SubCell"/>
</dbReference>
<dbReference type="GO" id="GO:0005524">
    <property type="term" value="F:ATP binding"/>
    <property type="evidence" value="ECO:0007669"/>
    <property type="project" value="UniProtKB-UniRule"/>
</dbReference>
<dbReference type="GO" id="GO:0000287">
    <property type="term" value="F:magnesium ion binding"/>
    <property type="evidence" value="ECO:0007669"/>
    <property type="project" value="UniProtKB-UniRule"/>
</dbReference>
<dbReference type="GO" id="GO:0004826">
    <property type="term" value="F:phenylalanine-tRNA ligase activity"/>
    <property type="evidence" value="ECO:0007669"/>
    <property type="project" value="UniProtKB-UniRule"/>
</dbReference>
<dbReference type="GO" id="GO:0000049">
    <property type="term" value="F:tRNA binding"/>
    <property type="evidence" value="ECO:0007669"/>
    <property type="project" value="InterPro"/>
</dbReference>
<dbReference type="GO" id="GO:0006432">
    <property type="term" value="P:phenylalanyl-tRNA aminoacylation"/>
    <property type="evidence" value="ECO:0007669"/>
    <property type="project" value="UniProtKB-UniRule"/>
</dbReference>
<dbReference type="CDD" id="cd00496">
    <property type="entry name" value="PheRS_alpha_core"/>
    <property type="match status" value="1"/>
</dbReference>
<dbReference type="FunFam" id="3.30.930.10:FF:000003">
    <property type="entry name" value="Phenylalanine--tRNA ligase alpha subunit"/>
    <property type="match status" value="1"/>
</dbReference>
<dbReference type="Gene3D" id="3.30.930.10">
    <property type="entry name" value="Bira Bifunctional Protein, Domain 2"/>
    <property type="match status" value="1"/>
</dbReference>
<dbReference type="HAMAP" id="MF_00281">
    <property type="entry name" value="Phe_tRNA_synth_alpha1"/>
    <property type="match status" value="1"/>
</dbReference>
<dbReference type="InterPro" id="IPR006195">
    <property type="entry name" value="aa-tRNA-synth_II"/>
</dbReference>
<dbReference type="InterPro" id="IPR045864">
    <property type="entry name" value="aa-tRNA-synth_II/BPL/LPL"/>
</dbReference>
<dbReference type="InterPro" id="IPR004529">
    <property type="entry name" value="Phe-tRNA-synth_IIc_asu"/>
</dbReference>
<dbReference type="InterPro" id="IPR004188">
    <property type="entry name" value="Phe-tRNA_ligase_II_N"/>
</dbReference>
<dbReference type="InterPro" id="IPR022911">
    <property type="entry name" value="Phe_tRNA_ligase_alpha1_bac"/>
</dbReference>
<dbReference type="InterPro" id="IPR002319">
    <property type="entry name" value="Phenylalanyl-tRNA_Synthase"/>
</dbReference>
<dbReference type="InterPro" id="IPR010978">
    <property type="entry name" value="tRNA-bd_arm"/>
</dbReference>
<dbReference type="NCBIfam" id="TIGR00468">
    <property type="entry name" value="pheS"/>
    <property type="match status" value="1"/>
</dbReference>
<dbReference type="PANTHER" id="PTHR11538:SF41">
    <property type="entry name" value="PHENYLALANINE--TRNA LIGASE, MITOCHONDRIAL"/>
    <property type="match status" value="1"/>
</dbReference>
<dbReference type="PANTHER" id="PTHR11538">
    <property type="entry name" value="PHENYLALANYL-TRNA SYNTHETASE"/>
    <property type="match status" value="1"/>
</dbReference>
<dbReference type="Pfam" id="PF02912">
    <property type="entry name" value="Phe_tRNA-synt_N"/>
    <property type="match status" value="1"/>
</dbReference>
<dbReference type="Pfam" id="PF01409">
    <property type="entry name" value="tRNA-synt_2d"/>
    <property type="match status" value="1"/>
</dbReference>
<dbReference type="SUPFAM" id="SSF55681">
    <property type="entry name" value="Class II aaRS and biotin synthetases"/>
    <property type="match status" value="1"/>
</dbReference>
<dbReference type="SUPFAM" id="SSF46589">
    <property type="entry name" value="tRNA-binding arm"/>
    <property type="match status" value="1"/>
</dbReference>
<dbReference type="PROSITE" id="PS50862">
    <property type="entry name" value="AA_TRNA_LIGASE_II"/>
    <property type="match status" value="1"/>
</dbReference>